<keyword id="KW-0002">3D-structure</keyword>
<keyword id="KW-1035">Host cytoplasm</keyword>
<keyword id="KW-0945">Host-virus interaction</keyword>
<keyword id="KW-1100">Inhibition of host NF-kappa-B by virus</keyword>
<keyword id="KW-0597">Phosphoprotein</keyword>
<keyword id="KW-0693">Viral RNA replication</keyword>
<keyword id="KW-0946">Virion</keyword>
<organismHost>
    <name type="scientific">Homo sapiens</name>
    <name type="common">Human</name>
    <dbReference type="NCBI Taxonomy" id="9606"/>
</organismHost>
<name>PHOSP_HRSVA</name>
<protein>
    <recommendedName>
        <fullName>Phosphoprotein</fullName>
        <shortName>Protein P</shortName>
    </recommendedName>
</protein>
<evidence type="ECO:0000250" key="1">
    <source>
        <dbReference type="UniProtKB" id="P33454"/>
    </source>
</evidence>
<evidence type="ECO:0000256" key="2">
    <source>
        <dbReference type="SAM" id="MobiDB-lite"/>
    </source>
</evidence>
<evidence type="ECO:0000269" key="3">
    <source>
    </source>
</evidence>
<evidence type="ECO:0000269" key="4">
    <source>
    </source>
</evidence>
<evidence type="ECO:0000269" key="5">
    <source>
    </source>
</evidence>
<evidence type="ECO:0000269" key="6">
    <source>
    </source>
</evidence>
<evidence type="ECO:0000269" key="7">
    <source>
    </source>
</evidence>
<evidence type="ECO:0000269" key="8">
    <source>
    </source>
</evidence>
<evidence type="ECO:0000269" key="9">
    <source>
    </source>
</evidence>
<evidence type="ECO:0000269" key="10">
    <source>
    </source>
</evidence>
<evidence type="ECO:0000269" key="11">
    <source>
    </source>
</evidence>
<evidence type="ECO:0000269" key="12">
    <source>
    </source>
</evidence>
<evidence type="ECO:0000269" key="13">
    <source>
    </source>
</evidence>
<evidence type="ECO:0000269" key="14">
    <source>
    </source>
</evidence>
<evidence type="ECO:0000269" key="15">
    <source>
    </source>
</evidence>
<evidence type="ECO:0000269" key="16">
    <source>
    </source>
</evidence>
<evidence type="ECO:0000269" key="17">
    <source>
    </source>
</evidence>
<evidence type="ECO:0000269" key="18">
    <source>
    </source>
</evidence>
<evidence type="ECO:0000269" key="19">
    <source>
    </source>
</evidence>
<evidence type="ECO:0000269" key="20">
    <source>
    </source>
</evidence>
<evidence type="ECO:0000305" key="21"/>
<evidence type="ECO:0007744" key="22">
    <source>
        <dbReference type="PDB" id="4UCB"/>
    </source>
</evidence>
<evidence type="ECO:0007744" key="23">
    <source>
        <dbReference type="PDB" id="6PZK"/>
    </source>
</evidence>
<evidence type="ECO:0007744" key="24">
    <source>
        <dbReference type="PDB" id="6UEN"/>
    </source>
</evidence>
<evidence type="ECO:0007829" key="25">
    <source>
        <dbReference type="PDB" id="6G0Y"/>
    </source>
</evidence>
<evidence type="ECO:0007829" key="26">
    <source>
        <dbReference type="PDB" id="6PZK"/>
    </source>
</evidence>
<evidence type="ECO:0007829" key="27">
    <source>
        <dbReference type="PDB" id="8FPI"/>
    </source>
</evidence>
<evidence type="ECO:0007829" key="28">
    <source>
        <dbReference type="PDB" id="8SNX"/>
    </source>
</evidence>
<dbReference type="EMBL" id="M11486">
    <property type="protein sequence ID" value="AAB59853.1"/>
    <property type="molecule type" value="Genomic_RNA"/>
</dbReference>
<dbReference type="EMBL" id="U50362">
    <property type="protein sequence ID" value="AAB86659.1"/>
    <property type="molecule type" value="Genomic_RNA"/>
</dbReference>
<dbReference type="EMBL" id="U50363">
    <property type="protein sequence ID" value="AAB86671.1"/>
    <property type="molecule type" value="Genomic_RNA"/>
</dbReference>
<dbReference type="EMBL" id="AF035006">
    <property type="protein sequence ID" value="AAC14897.1"/>
    <property type="molecule type" value="Genomic_RNA"/>
</dbReference>
<dbReference type="EMBL" id="U63644">
    <property type="protein sequence ID" value="AAC55965.1"/>
    <property type="molecule type" value="Genomic_RNA"/>
</dbReference>
<dbReference type="PIR" id="A04037">
    <property type="entry name" value="RRNZ"/>
</dbReference>
<dbReference type="PDB" id="4UCB">
    <property type="method" value="X-ray"/>
    <property type="resolution" value="2.79 A"/>
    <property type="chains" value="C/D=235-241"/>
</dbReference>
<dbReference type="PDB" id="6G0Y">
    <property type="method" value="X-ray"/>
    <property type="resolution" value="2.42 A"/>
    <property type="chains" value="G/H/I/J=90-110"/>
</dbReference>
<dbReference type="PDB" id="6PZK">
    <property type="method" value="EM"/>
    <property type="resolution" value="3.20 A"/>
    <property type="chains" value="B/C/D/E=1-241"/>
</dbReference>
<dbReference type="PDB" id="6UEN">
    <property type="method" value="EM"/>
    <property type="resolution" value="3.67 A"/>
    <property type="chains" value="B/C/D/E=1-241"/>
</dbReference>
<dbReference type="PDB" id="6YP5">
    <property type="method" value="NMR"/>
    <property type="chains" value="A/B/C/D=127-163"/>
</dbReference>
<dbReference type="PDB" id="8FPI">
    <property type="method" value="EM"/>
    <property type="resolution" value="2.39 A"/>
    <property type="chains" value="B/C/D/E=1-241"/>
</dbReference>
<dbReference type="PDB" id="8FU3">
    <property type="method" value="EM"/>
    <property type="resolution" value="2.88 A"/>
    <property type="chains" value="B/C/D/E=1-241"/>
</dbReference>
<dbReference type="PDB" id="8SNX">
    <property type="method" value="EM"/>
    <property type="resolution" value="3.40 A"/>
    <property type="chains" value="B/C/D/E=1-241"/>
</dbReference>
<dbReference type="PDB" id="8SNY">
    <property type="method" value="EM"/>
    <property type="resolution" value="3.41 A"/>
    <property type="chains" value="B/C/D/E=1-241"/>
</dbReference>
<dbReference type="PDB" id="9C7Y">
    <property type="method" value="EM"/>
    <property type="resolution" value="3.24 A"/>
    <property type="chains" value="B/C/D/E=1-241"/>
</dbReference>
<dbReference type="PDBsum" id="4UCB"/>
<dbReference type="PDBsum" id="6G0Y"/>
<dbReference type="PDBsum" id="6PZK"/>
<dbReference type="PDBsum" id="6UEN"/>
<dbReference type="PDBsum" id="6YP5"/>
<dbReference type="PDBsum" id="8FPI"/>
<dbReference type="PDBsum" id="8FU3"/>
<dbReference type="PDBsum" id="8SNX"/>
<dbReference type="PDBsum" id="8SNY"/>
<dbReference type="PDBsum" id="9C7Y"/>
<dbReference type="EMDB" id="EMD-20536"/>
<dbReference type="EMDB" id="EMD-29365"/>
<dbReference type="EMDB" id="EMD-29452"/>
<dbReference type="EMDB" id="EMD-45296"/>
<dbReference type="SMR" id="P03421"/>
<dbReference type="IntAct" id="P03421">
    <property type="interactions" value="22"/>
</dbReference>
<dbReference type="BindingDB" id="P03421"/>
<dbReference type="ChEMBL" id="CHEMBL4105718"/>
<dbReference type="iPTMnet" id="P03421"/>
<dbReference type="Reactome" id="R-HSA-9820960">
    <property type="pathway name" value="Respiratory syncytial virus (RSV) attachment and entry"/>
</dbReference>
<dbReference type="Reactome" id="R-HSA-9820962">
    <property type="pathway name" value="Assembly and release of respiratory syncytial virus (RSV) virions"/>
</dbReference>
<dbReference type="Reactome" id="R-HSA-9828642">
    <property type="pathway name" value="Respiratory syncytial virus genome transcription"/>
</dbReference>
<dbReference type="Reactome" id="R-HSA-9828721">
    <property type="pathway name" value="Translation of respiratory syncytial virus mRNAs"/>
</dbReference>
<dbReference type="Reactome" id="R-HSA-9828806">
    <property type="pathway name" value="Maturation of hRSV A proteins"/>
</dbReference>
<dbReference type="Reactome" id="R-HSA-9833110">
    <property type="pathway name" value="RSV-host interactions"/>
</dbReference>
<dbReference type="Reactome" id="R-HSA-9834752">
    <property type="pathway name" value="Respiratory syncytial virus genome replication"/>
</dbReference>
<dbReference type="CD-CODE" id="21EC1620">
    <property type="entry name" value="Inclusion body"/>
</dbReference>
<dbReference type="EvolutionaryTrace" id="P03421"/>
<dbReference type="Proteomes" id="UP000007678">
    <property type="component" value="Genome"/>
</dbReference>
<dbReference type="Proteomes" id="UP000134464">
    <property type="component" value="Genome"/>
</dbReference>
<dbReference type="Proteomes" id="UP000181145">
    <property type="component" value="Genome"/>
</dbReference>
<dbReference type="Proteomes" id="UP000181262">
    <property type="component" value="Genome"/>
</dbReference>
<dbReference type="Proteomes" id="UP000181559">
    <property type="component" value="Genome"/>
</dbReference>
<dbReference type="GO" id="GO:0030430">
    <property type="term" value="C:host cell cytoplasm"/>
    <property type="evidence" value="ECO:0007669"/>
    <property type="project" value="UniProtKB-SubCell"/>
</dbReference>
<dbReference type="GO" id="GO:0044423">
    <property type="term" value="C:virion component"/>
    <property type="evidence" value="ECO:0007669"/>
    <property type="project" value="UniProtKB-KW"/>
</dbReference>
<dbReference type="GO" id="GO:0003968">
    <property type="term" value="F:RNA-directed RNA polymerase activity"/>
    <property type="evidence" value="ECO:0007669"/>
    <property type="project" value="InterPro"/>
</dbReference>
<dbReference type="GO" id="GO:0085034">
    <property type="term" value="P:symbiont-mediated suppression of host NF-kappaB cascade"/>
    <property type="evidence" value="ECO:0007669"/>
    <property type="project" value="UniProtKB-KW"/>
</dbReference>
<dbReference type="GO" id="GO:0019058">
    <property type="term" value="P:viral life cycle"/>
    <property type="evidence" value="ECO:0000314"/>
    <property type="project" value="DisProt"/>
</dbReference>
<dbReference type="DisProt" id="DP00895"/>
<dbReference type="InterPro" id="IPR003487">
    <property type="entry name" value="Pprotein_pneumovir"/>
</dbReference>
<dbReference type="Pfam" id="PF02478">
    <property type="entry name" value="Pneumo_phosprot"/>
    <property type="match status" value="1"/>
</dbReference>
<feature type="chain" id="PRO_0000142723" description="Phosphoprotein">
    <location>
        <begin position="1"/>
        <end position="241"/>
    </location>
</feature>
<feature type="region of interest" description="Binding to monomeric RNA-free nucleoprotein" evidence="12">
    <location>
        <begin position="1"/>
        <end position="30"/>
    </location>
</feature>
<feature type="region of interest" description="Important for viral particle assembly" evidence="19">
    <location>
        <begin position="39"/>
        <end position="57"/>
    </location>
</feature>
<feature type="region of interest" description="Disordered" evidence="2">
    <location>
        <begin position="58"/>
        <end position="78"/>
    </location>
</feature>
<feature type="region of interest" description="Binding to host phosphatase PP1" evidence="17">
    <location>
        <begin position="81"/>
        <end position="87"/>
    </location>
</feature>
<feature type="region of interest" description="Binding to protein M2-1" evidence="17">
    <location>
        <begin position="90"/>
        <end position="110"/>
    </location>
</feature>
<feature type="region of interest" description="Oligomerization and binding to RNA-directed RNA polymerase L" evidence="5">
    <location>
        <begin position="120"/>
        <end position="160"/>
    </location>
</feature>
<feature type="region of interest" description="Disordered" evidence="2">
    <location>
        <begin position="201"/>
        <end position="241"/>
    </location>
</feature>
<feature type="region of interest" description="Binding to RNA-directed RNA polymerase L" evidence="13 14">
    <location>
        <begin position="216"/>
        <end position="232"/>
    </location>
</feature>
<feature type="region of interest" description="Binding to the N-RNA complex" evidence="8 11 14">
    <location>
        <begin position="232"/>
        <end position="241"/>
    </location>
</feature>
<feature type="compositionally biased region" description="Polar residues" evidence="2">
    <location>
        <begin position="58"/>
        <end position="67"/>
    </location>
</feature>
<feature type="compositionally biased region" description="Basic and acidic residues" evidence="2">
    <location>
        <begin position="201"/>
        <end position="211"/>
    </location>
</feature>
<feature type="compositionally biased region" description="Polar residues" evidence="2">
    <location>
        <begin position="213"/>
        <end position="223"/>
    </location>
</feature>
<feature type="compositionally biased region" description="Acidic residues" evidence="2">
    <location>
        <begin position="230"/>
        <end position="241"/>
    </location>
</feature>
<feature type="site" description="Interaction with protein M2-1">
    <location>
        <position position="108"/>
    </location>
</feature>
<feature type="modified residue" description="Phosphothreonine; by host" evidence="7">
    <location>
        <position position="108"/>
    </location>
</feature>
<feature type="modified residue" description="Phosphoserine; by host" evidence="4 14">
    <location>
        <position position="116"/>
    </location>
</feature>
<feature type="modified residue" description="Phosphoserine; by host" evidence="4 14">
    <location>
        <position position="117"/>
    </location>
</feature>
<feature type="modified residue" description="Phosphoserine; by host" evidence="4 14">
    <location>
        <position position="119"/>
    </location>
</feature>
<feature type="modified residue" description="Phosphoserine; by host" evidence="4 14">
    <location>
        <position position="232"/>
    </location>
</feature>
<feature type="modified residue" description="Phosphoserine; by host" evidence="4 14">
    <location>
        <position position="237"/>
    </location>
</feature>
<feature type="sequence variant">
    <original>I</original>
    <variation>V</variation>
    <location>
        <position position="171"/>
    </location>
</feature>
<feature type="mutagenesis site" description="Almost complete loss of viral transcription. Complete loss of interaction with host phosphatase PP1." evidence="17">
    <original>F</original>
    <variation>A</variation>
    <location>
        <position position="87"/>
    </location>
</feature>
<feature type="mutagenesis site" description="Complete loss of interaction with protein M2-1. Almost complete loss of viral transcription and loss of localization of protein M2-1 in inclusion bodies." evidence="17">
    <original>F</original>
    <variation>A</variation>
    <location>
        <position position="98"/>
    </location>
</feature>
<feature type="mutagenesis site" description="Complete loss of interaction with protein M2-1. Almost complete loss of viral transcription and loss of localization of protein M2-1 in inclusion bodies." evidence="5 17">
    <original>L</original>
    <variation>A</variation>
    <location>
        <position position="101"/>
    </location>
</feature>
<feature type="mutagenesis site" description="Complete loss of interaction with protein M2-1. Almost complete loss of viral transcription and loss of localization of protein M2-1 in inclusion bodies." evidence="5 17">
    <original>Y</original>
    <variation>A</variation>
    <location>
        <position position="102"/>
    </location>
</feature>
<feature type="mutagenesis site" description="Complete loss of interaction with protein M2-1. Almost complete loss of viral transcription and loss of localization of protein M2-1 in inclusion bodies." evidence="17">
    <original>T</original>
    <variation>A</variation>
    <variation>D</variation>
    <location>
        <position position="105"/>
    </location>
</feature>
<feature type="mutagenesis site" description="Complete loss of interaction with protein M2-1. Almost complete loss of viral transcription and loss of localization of protein M2-1 in inclusion bodies." evidence="17">
    <original>I</original>
    <variation>A</variation>
    <location>
        <position position="106"/>
    </location>
</feature>
<feature type="mutagenesis site" description="Loss of interaction with protein M2-1 and loss of localization of protein M2-1 in inclusion bodies." evidence="14 17">
    <original>T</original>
    <variation>D</variation>
    <location>
        <position position="108"/>
    </location>
</feature>
<feature type="mutagenesis site" description="Complete loss of interaction with protein M2-1. Almost complete loss of viral transcription and loss of localization of protein M2-1 in inclusion bodies." evidence="5 17">
    <original>F</original>
    <variation>A</variation>
    <location>
        <position position="109"/>
    </location>
</feature>
<feature type="mutagenesis site" description="60% loss of transcription inhibition by M2-2." evidence="14">
    <original>SSYS</original>
    <variation>DDYD</variation>
    <location>
        <begin position="116"/>
        <end position="119"/>
    </location>
</feature>
<feature type="mutagenesis site" description="60% loss of transcription inhibition by M2-2." evidence="14">
    <original>SSYS</original>
    <variation>LRYL</variation>
    <location>
        <begin position="116"/>
        <end position="119"/>
    </location>
</feature>
<feature type="mutagenesis site" description="Almost complete loss of interaction with the nucleoprotein." evidence="3">
    <original>G</original>
    <variation>S</variation>
    <location>
        <position position="172"/>
    </location>
</feature>
<feature type="mutagenesis site" description="Complete loss of interaction with the nucleoprotein." evidence="3">
    <original>E</original>
    <variation>G</variation>
    <location>
        <position position="176"/>
    </location>
</feature>
<feature type="mutagenesis site" description="Complete loss of interaction with the N-RNA complex; when associated with A-239." evidence="9">
    <original>D</original>
    <variation>A</variation>
    <location>
        <position position="233"/>
    </location>
</feature>
<feature type="mutagenesis site" description="No effect on the interaction with the N-RNA complex." evidence="9">
    <original>L</original>
    <variation>P</variation>
    <location>
        <position position="236"/>
    </location>
</feature>
<feature type="mutagenesis site" description="Complete loss of interaction with the N-RNA complex." evidence="9">
    <original>ED</original>
    <variation>AA</variation>
    <location>
        <begin position="239"/>
        <end position="240"/>
    </location>
</feature>
<feature type="mutagenesis site" description="Complete loss of interaction with the N-RNA complex; when associated with A-233." evidence="9">
    <original>E</original>
    <variation>A</variation>
    <location>
        <position position="239"/>
    </location>
</feature>
<feature type="mutagenesis site" description="Complete loss of interaction with N and viral RNA synthesis." evidence="5 9">
    <original>F</original>
    <variation>A</variation>
    <location>
        <position position="241"/>
    </location>
</feature>
<feature type="helix" evidence="25">
    <location>
        <begin position="99"/>
        <end position="107"/>
    </location>
</feature>
<feature type="turn" evidence="27">
    <location>
        <begin position="131"/>
        <end position="133"/>
    </location>
</feature>
<feature type="helix" evidence="27">
    <location>
        <begin position="134"/>
        <end position="138"/>
    </location>
</feature>
<feature type="turn" evidence="27">
    <location>
        <begin position="139"/>
        <end position="143"/>
    </location>
</feature>
<feature type="turn" evidence="27">
    <location>
        <begin position="145"/>
        <end position="147"/>
    </location>
</feature>
<feature type="strand" evidence="27">
    <location>
        <begin position="148"/>
        <end position="155"/>
    </location>
</feature>
<feature type="helix" evidence="26">
    <location>
        <begin position="161"/>
        <end position="163"/>
    </location>
</feature>
<feature type="strand" evidence="27">
    <location>
        <begin position="164"/>
        <end position="167"/>
    </location>
</feature>
<feature type="strand" evidence="27">
    <location>
        <begin position="170"/>
        <end position="173"/>
    </location>
</feature>
<feature type="helix" evidence="27">
    <location>
        <begin position="174"/>
        <end position="182"/>
    </location>
</feature>
<feature type="helix" evidence="27">
    <location>
        <begin position="191"/>
        <end position="198"/>
    </location>
</feature>
<feature type="helix" evidence="27">
    <location>
        <begin position="204"/>
        <end position="209"/>
    </location>
</feature>
<feature type="helix" evidence="27">
    <location>
        <begin position="218"/>
        <end position="226"/>
    </location>
</feature>
<feature type="turn" evidence="28">
    <location>
        <begin position="238"/>
        <end position="240"/>
    </location>
</feature>
<organism>
    <name type="scientific">Human respiratory syncytial virus A (strain A2)</name>
    <dbReference type="NCBI Taxonomy" id="11259"/>
    <lineage>
        <taxon>Viruses</taxon>
        <taxon>Riboviria</taxon>
        <taxon>Orthornavirae</taxon>
        <taxon>Negarnaviricota</taxon>
        <taxon>Haploviricotina</taxon>
        <taxon>Monjiviricetes</taxon>
        <taxon>Mononegavirales</taxon>
        <taxon>Pneumoviridae</taxon>
        <taxon>Orthopneumovirus</taxon>
        <taxon>Orthopneumovirus hominis</taxon>
    </lineage>
</organism>
<proteinExistence type="evidence at protein level"/>
<comment type="function">
    <text evidence="1 12 14 17">Plays critical roles in regulating RNA replication and transcription through its interactions with multiple proteins (PubMed:25568210, PubMed:26474524). Tethers the RNA-directed RNA polymerase L to the nucleoprotein-RNA complex (PubMed:26474524). Recruits the M2-1 protein, a processivity factor that is required for efficient transcription of viral RNA (PubMed:26474524). Acts as a chaperone for neo-synthesized nucleoprotein by forming an N-P complex that preserves N in a monomeric and RNA-free state and prevents the association of nascent N with host cell RNAs (PubMed:25568210). Recruits the host phosphatase PP1 to inclusion bodies to regulate viral transcription (PubMed:29489893). Together with the nucleoprotein, sequesters host NF-kappa-B in inclusion bodies (IBs) thereby inhibiting this host defense pathway (By similarity).</text>
</comment>
<comment type="subunit">
    <text evidence="3 4 5 6 7 8 9 10 11 12 13 14 16 17 18 20">Homotetramer (PubMed:15166449, PubMed:22978633). Interacts with protein M2-1; the interaction between the two tetramers is required for the anti-termination and elongation transcriptional activities of protein M2-1 (PubMed:12970453, PubMed:17098979, PubMed:22978633, PubMed:26474524, PubMed:29489893). Interacts with host phosphatase PP1; this interaction recruits PP1 to the inclusion bodies (PubMed:29489893). Formation of a complex PP1/M2-1/P allows P to target host PP1 phosphatase to the M2-1 substrate (PubMed:29489893). Interacts (via C-terminus) with the nucleoprotein N (via N-terminus); the phosphorylated phosphoprotein P binds to N-RNA complex (PubMed:11861854, PubMed:12368320, PubMed:17170452, PubMed:22623798, PubMed:25407889, PubMed:26474524). Interacts (via N-terminus) with the monomeric RNA-free nucleoprotein N (PubMed:25568210, PubMed:28031463, PubMed:30626736). Interacts (via C-terminus) with RNA-directed RNA polymerase L; the association of P and L forms the polymerase complex (PubMed:25653447, PubMed:26474524, PubMed:31953395).</text>
</comment>
<comment type="subcellular location">
    <subcellularLocation>
        <location evidence="15">Virion</location>
    </subcellularLocation>
    <subcellularLocation>
        <location evidence="15">Host cytoplasm</location>
    </subcellularLocation>
    <text evidence="15">Localizes in cytoplasmic inclusion bodies.</text>
</comment>
<comment type="domain">
    <text evidence="6 14 19">The N-terminus is important for viral particle assembly (PubMed:31009855). The oligomerization region is central (PubMed:15166449). The C-terminus part contains binding regions for the RNA-directed RNA polymerase L and the nucleoprotein (PubMed:26474524).</text>
</comment>
<comment type="PTM">
    <text evidence="7 11 14">Constitutively phosphorylated by host (PubMed:17098979). Phosphorylation at S-116, S-117, S-119, S-232 and S-237 is required for transcription inhibition by M2-2 and viral particle egress (PubMed:26474524). Phosphorylation at S-232 and S-237 increases the affinity of the binding to the nucleoprotein (PubMed:25407889).</text>
</comment>
<comment type="similarity">
    <text evidence="21">Belongs to the pneumoviridae phosphoprotein P family.</text>
</comment>
<sequence length="241" mass="27148">MEKFAPEFHGEDANNRATKFLESIKGKFTSPKDPKKKDSIISVNSIDIEVTKESPITSNSTIINPTNETDDTAGNKPNYQRKPLVSFKEDPTPSDNPFSKLYKETIETFDNNEEESSYSYEEINDQTNDNITARLDRIDEKLSEILGMLHTLVVASAGPTSARDGIRDAMIGLREEMIEKIRTEALMTNDRLEAMARLRNEESEKMAKDTSDEVSLNPTSEKLNNLLEGNDSDNDLSLEDF</sequence>
<reference key="1">
    <citation type="journal article" date="1984" name="J. Virol.">
        <title>Sequence analysis of the respiratory syncytial virus phosphoprotein gene.</title>
        <authorList>
            <person name="Satake M."/>
            <person name="Elango N."/>
            <person name="Venkatesan S."/>
        </authorList>
    </citation>
    <scope>NUCLEOTIDE SEQUENCE [GENOMIC RNA]</scope>
</reference>
<reference key="2">
    <citation type="journal article" date="1996" name="Virology">
        <title>Nucleotide sequence analysis of the respiratory syncytial virus subgroup A cold-passaged (cp) temperature sensitive (ts) cpts-248/404 live attenuated virus vaccine candidate.</title>
        <authorList>
            <person name="Firestone C.Y."/>
            <person name="Whitehead S.S."/>
            <person name="Collins P.L."/>
            <person name="Murphy B.R."/>
            <person name="Crowe J.E. Jr."/>
        </authorList>
    </citation>
    <scope>NUCLEOTIDE SEQUENCE [GENOMIC RNA]</scope>
    <source>
        <strain>Cold-passage attenuated</strain>
    </source>
</reference>
<reference key="3">
    <citation type="journal article" date="1996" name="Virus Genes">
        <title>Acquisition of the ts phenotype by a chemically mutagenized cold-passaged human respiratory syncytial virus vaccine candidate results from the acquisition of a single mutation in the polymerase (L) gene.</title>
        <authorList>
            <person name="Crowe J.E. Jr."/>
            <person name="Firestone C.Y."/>
            <person name="Whitehead S.S."/>
            <person name="Collins P.L."/>
            <person name="Murphy B.R."/>
        </authorList>
    </citation>
    <scope>NUCLEOTIDE SEQUENCE [GENOMIC RNA]</scope>
    <source>
        <strain>Cold-passage attenuated</strain>
    </source>
</reference>
<reference key="4">
    <citation type="journal article" date="1995" name="Virology">
        <title>A cold-passaged, attenuated strain of human respiratory syncytial virus contains mutations in the F and L genes.</title>
        <authorList>
            <person name="Connors M."/>
            <person name="Crowe J.E. Jr."/>
            <person name="Firestone C.Y."/>
            <person name="Murphy B.R."/>
            <person name="Collins P.L."/>
        </authorList>
    </citation>
    <scope>NUCLEOTIDE SEQUENCE [GENOMIC RNA]</scope>
    <source>
        <strain>Cold-passage attenuated</strain>
    </source>
</reference>
<reference key="5">
    <citation type="journal article" date="1998" name="J. Virol.">
        <title>Recombinant respiratory syncytial virus (RSV) bearing a set of mutations from cold-passaged RSV is attenuated in chimpanzees.</title>
        <authorList>
            <person name="Whitehead S.S."/>
            <person name="Juhasz K."/>
            <person name="Firestone C.Y."/>
            <person name="Collins P.L."/>
            <person name="Murphy B.R."/>
        </authorList>
    </citation>
    <scope>NUCLEOTIDE SEQUENCE [GENOMIC RNA]</scope>
    <source>
        <strain>Cold-passage attenuated</strain>
    </source>
</reference>
<reference key="6">
    <citation type="journal article" date="2002" name="J. Virol.">
        <title>Identification of temperature-sensitive mutations in the phosphoprotein of respiratory syncytial virus that are likely involved in its interaction with the nucleoprotein.</title>
        <authorList>
            <person name="Lu B."/>
            <person name="Brazas R."/>
            <person name="Ma C.H."/>
            <person name="Kristoff T."/>
            <person name="Cheng X."/>
            <person name="Jin H."/>
        </authorList>
    </citation>
    <scope>INTERACTION WITH THE NUCLEOPROTEIN</scope>
    <scope>MUTAGENESIS OF GLY-172 AND GLU-176</scope>
</reference>
<reference key="7">
    <citation type="journal article" date="2002" name="J. Virol.">
        <title>The major phosphorylation sites of the respiratory syncytial virus phosphoprotein are dispensable for virus replication in vitro.</title>
        <authorList>
            <person name="Lu B."/>
            <person name="Ma C.H."/>
            <person name="Brazas R."/>
            <person name="Jin H."/>
        </authorList>
    </citation>
    <scope>INTERACTION WITH THE NUCLEOPROTEIN</scope>
    <scope>PHOSPHORYLATION AT SER-116; SER-117; SER-119; SER-232 AND SER-237</scope>
</reference>
<reference key="8">
    <citation type="journal article" date="2003" name="J. Virol.">
        <title>Interaction between human respiratory syncytial virus (RSV) M2-1 and P proteins is required for reconstitution of M2-1-dependent RSV minigenome activity.</title>
        <authorList>
            <person name="Mason S.W."/>
            <person name="Aberg E."/>
            <person name="Lawetz C."/>
            <person name="DeLong R."/>
            <person name="Whitehead P."/>
            <person name="Liuzzi M."/>
        </authorList>
    </citation>
    <scope>INTERACTION WITH PROTEIN M2-1</scope>
    <scope>MUTAGENESIS OF LEU-101; TYR-102; PHE-109 AND PHE-241</scope>
</reference>
<reference key="9">
    <citation type="journal article" date="2004" name="J. Gen. Virol.">
        <title>Biochemical characterization of the respiratory syncytial virus P-P and P-N protein complexes and localization of the P protein oligomerization domain.</title>
        <authorList>
            <person name="Castagne N."/>
            <person name="Barbier A."/>
            <person name="Bernard J."/>
            <person name="Rezaei H."/>
            <person name="Huet J.C."/>
            <person name="Henry C."/>
            <person name="Da Costa B."/>
            <person name="Eleouet J.F."/>
        </authorList>
    </citation>
    <scope>DOMAIN</scope>
    <scope>SUBUNIT</scope>
</reference>
<reference key="10">
    <citation type="journal article" date="2006" name="J. Gen. Virol.">
        <title>Phosphorylation of human respiratory syncytial virus P protein at threonine 108 controls its interaction with the M2-1 protein in the viral RNA polymerase complex.</title>
        <authorList>
            <person name="Asenjo A."/>
            <person name="Calvo E."/>
            <person name="Villanueva N."/>
        </authorList>
    </citation>
    <scope>INTERACTION WITH PROTEIN M2-1</scope>
    <scope>PHOSPHORYLATION AT THR-108</scope>
</reference>
<reference key="11">
    <citation type="journal article" date="2007" name="J. Gen. Virol.">
        <title>The nine C-terminal amino acids of the respiratory syncytial virus protein P are necessary and sufficient for binding to ribonucleoprotein complexes in which six ribonucleotides are contacted per N protein protomer.</title>
        <authorList>
            <person name="Tran T.L."/>
            <person name="Castagne N."/>
            <person name="Bhella D."/>
            <person name="Varela P.F."/>
            <person name="Bernard J."/>
            <person name="Chilmonczyk S."/>
            <person name="Berkenkamp S."/>
            <person name="Benhamo V."/>
            <person name="Grznarova K."/>
            <person name="Grosclaude J."/>
            <person name="Nespoulos C."/>
            <person name="Rey F.A."/>
            <person name="Eleouet J.F."/>
        </authorList>
    </citation>
    <scope>INTERACTION WITH THE NUCLEOPROTEIN</scope>
</reference>
<reference key="12">
    <citation type="journal article" date="2012" name="Biochemistry">
        <title>Modular unfolding and dissociation of the human respiratory syncytial virus phosphoprotein p and its interaction with the m(2-1) antiterminator: a singular tetramer-tetramer interface arrangement.</title>
        <authorList>
            <person name="Esperante S.A."/>
            <person name="Paris G."/>
            <person name="de Prat-Gay G."/>
        </authorList>
    </citation>
    <scope>INTERACTION WITH M1-2 PROTEIN</scope>
    <scope>SUBUNIT</scope>
</reference>
<reference key="13">
    <citation type="journal article" date="2012" name="J. Virol.">
        <title>Characterization of a viral phosphoprotein binding site on the surface of the respiratory syncytial nucleoprotein.</title>
        <authorList>
            <person name="Galloux M."/>
            <person name="Tarus B."/>
            <person name="Blazevic I."/>
            <person name="Fix J."/>
            <person name="Duquerroy S."/>
            <person name="Eleouet J.F."/>
        </authorList>
    </citation>
    <scope>INTERACTION WITH THE NUCLEOPROTEIN</scope>
    <scope>MUTAGENESIS OF ASP-233; LEU-236; GLU-239; 239-GLU-ASP-240 AND PHE-241</scope>
</reference>
<reference key="14">
    <citation type="journal article" date="2014" name="Virol. J.">
        <title>Quantitative investigation of the affinity of human respiratory syncytial virus phosphoprotein C-terminus binding to nucleocapsid protein.</title>
        <authorList>
            <person name="Shapiro A.B."/>
            <person name="Gao N."/>
            <person name="O'Connell N."/>
            <person name="Hu J."/>
            <person name="Thresher J."/>
            <person name="Gu R.F."/>
            <person name="Overman R."/>
            <person name="Hardern I.M."/>
            <person name="Sproat G.G."/>
        </authorList>
    </citation>
    <scope>INTERACTION WITH THE NUCLEOPROTEIN</scope>
    <scope>PHOSPHORYLATION AT SER-232 AND SER-237</scope>
</reference>
<reference key="15">
    <citation type="journal article" date="2015" name="J. Virol.">
        <title>Identification and characterization of the binding site of the respiratory syncytial virus phosphoprotein to RNA-free nucleoprotein.</title>
        <authorList>
            <person name="Galloux M."/>
            <person name="Gabiane G."/>
            <person name="Sourimant J."/>
            <person name="Richard C.A."/>
            <person name="England P."/>
            <person name="Moudjou M."/>
            <person name="Aumont-Nicaise M."/>
            <person name="Fix J."/>
            <person name="Rameix-Welti M.A."/>
            <person name="Eleouet J.F."/>
        </authorList>
    </citation>
    <scope>INTERACTION WITH THE NUCLEOPROTEIN</scope>
    <scope>FUNCTION</scope>
</reference>
<reference key="16">
    <citation type="journal article" date="2015" name="J. Virol.">
        <title>Fine mapping and characterization of the L-polymerase-binding domain of the respiratory syncytial virus phosphoprotein.</title>
        <authorList>
            <person name="Sourimant J."/>
            <person name="Rameix-Welti M.A."/>
            <person name="Gaillard A.L."/>
            <person name="Chevret D."/>
            <person name="Galloux M."/>
            <person name="Gault E."/>
            <person name="Eleouet J.F."/>
        </authorList>
    </citation>
    <scope>INTERACTION WITH RNA-DIRECTED RNA POLYMERASE L</scope>
</reference>
<reference key="17">
    <citation type="journal article" date="2016" name="Virus Res.">
        <title>Phosphorylation of the human respiratory syncytial virus P protein mediates M2-2 regulation of viral RNA synthesis, a process that involves two P proteins.</title>
        <authorList>
            <person name="Asenjo A."/>
            <person name="Villanueva N."/>
        </authorList>
    </citation>
    <scope>PHOSPHORYLATION AT SER-116; SER-117; SER-119; SER-232 AND SER-237</scope>
    <scope>MUTAGENESIS OF 116-SER--SER-119 AND THR-108</scope>
    <scope>INTERACTION WITH THE NUCLEOPROTEIN</scope>
    <scope>INTERACTION WITH RNA-DIRECTED RNA POLYMERASE L</scope>
    <scope>INTERACTION WITH PROTEIN M2-1</scope>
    <scope>FUNCTION</scope>
    <scope>DOMAIN</scope>
</reference>
<reference key="18">
    <citation type="journal article" date="2016" name="J. Virol.">
        <title>The Respiratory Syncytial Virus Phosphoprotein, Matrix Protein, and Fusion Protein Carboxy-Terminal Domain Drive Efficient Filamentous Virus-Like Particle Formation.</title>
        <authorList>
            <person name="Meshram C.D."/>
            <person name="Baviskar P.S."/>
            <person name="Ognibene C.M."/>
            <person name="Oomens A.G.P."/>
        </authorList>
    </citation>
    <scope>SUBCELLULAR LOCATION</scope>
</reference>
<reference key="19">
    <citation type="journal article" date="2017" name="J. Biol. Chem.">
        <title>New Insights into Structural Disorder in Human Respiratory Syncytial Virus Phosphoprotein and Implications for Binding of Protein Partners.</title>
        <authorList>
            <person name="Pereira N."/>
            <person name="Cardone C."/>
            <person name="Lassoued S."/>
            <person name="Galloux M."/>
            <person name="Fix J."/>
            <person name="Assrir N."/>
            <person name="Lescop E."/>
            <person name="Bontems F."/>
            <person name="Eleouet J.F."/>
            <person name="Sizun C."/>
        </authorList>
    </citation>
    <scope>INTERACTION WITH THE NUCLEOPROTEIN</scope>
</reference>
<reference key="20">
    <citation type="journal article" date="2018" name="PLoS Pathog.">
        <title>RSV hijacks cellular protein phosphatase 1 to regulate M2-1 phosphorylation and viral transcription.</title>
        <authorList>
            <person name="Richard C.A."/>
            <person name="Rincheval V."/>
            <person name="Lassoued S."/>
            <person name="Fix J."/>
            <person name="Cardone C."/>
            <person name="Esneau C."/>
            <person name="Nekhai S."/>
            <person name="Galloux M."/>
            <person name="Rameix-Welti M.A."/>
            <person name="Sizun C."/>
            <person name="Eleouet J.F."/>
        </authorList>
    </citation>
    <scope>INTERACTION WITH M1-2 PROTEIN</scope>
    <scope>INTERACTION WITH HOST PHOSPHATASE PP1</scope>
    <scope>IDENTIFICATION IN A COMPLEX PP1/M2-1/P</scope>
    <scope>MUTAGENESIS OF PHE-87; PHE-98; LEU-101; TYR-102; THR-105; ILE-106; THR-108 AND PHE-109</scope>
    <scope>FUNCTION</scope>
</reference>
<reference key="21">
    <citation type="journal article" date="2019" name="Virology">
        <title>Identification of a human respiratory syncytial virus phosphoprotein domain required for virus-like-particle formation.</title>
        <authorList>
            <person name="Meshram C.D."/>
            <person name="Oomens A.G.P."/>
        </authorList>
    </citation>
    <scope>DOMAIN</scope>
</reference>
<reference key="22">
    <citation type="journal article" date="2019" name="J. Biol. Chem.">
        <title>Biochemical characterization of the respiratory syncytial virus N0-P complex in solution.</title>
        <authorList>
            <person name="Esneau C."/>
            <person name="Raynal B."/>
            <person name="Roblin P."/>
            <person name="Brule S."/>
            <person name="Richard C.A."/>
            <person name="Fix J."/>
            <person name="Eleouet J.F."/>
            <person name="Galloux M."/>
        </authorList>
    </citation>
    <scope>INTERACTION WITH THE NUCLEOPROTEIN</scope>
</reference>
<reference evidence="22" key="23">
    <citation type="journal article" date="2015" name="J. Virol.">
        <title>A Druggable Pocket at the Nucleocapsid/Phosphoprotein Interaction Site of Human Respiratory Syncytial Virus.</title>
        <authorList>
            <person name="Ouizougun-Oubari M."/>
            <person name="Pereira N."/>
            <person name="Tarus B."/>
            <person name="Galloux M."/>
            <person name="Lassoued S."/>
            <person name="Fix J."/>
            <person name="Tortorici M.A."/>
            <person name="Hoos S."/>
            <person name="Baron B."/>
            <person name="England P."/>
            <person name="Desmaele D."/>
            <person name="Couvreur P."/>
            <person name="Bontems F."/>
            <person name="Rey F.A."/>
            <person name="Eleouet J.F."/>
            <person name="Sizun C."/>
            <person name="Slama-Schwok A."/>
            <person name="Duquerroy S."/>
        </authorList>
    </citation>
    <scope>X-RAY CRYSTALLOGRAPHY (2.79 ANGSTROMS) OF 235-241</scope>
</reference>
<reference evidence="23" key="24">
    <citation type="journal article" date="2019" name="Cell">
        <title>Structure of the Respiratory Syncytial Virus Polymerase Complex.</title>
        <authorList>
            <person name="Gilman M.S.A."/>
            <person name="Liu C."/>
            <person name="Fung A."/>
            <person name="Behera I."/>
            <person name="Jordan P."/>
            <person name="Rigaux P."/>
            <person name="Ysebaert N."/>
            <person name="Tcherniuk S."/>
            <person name="Sourimant J."/>
            <person name="Eleouet J.F."/>
            <person name="Sutto-Ortiz P."/>
            <person name="Decroly E."/>
            <person name="Roymans D."/>
            <person name="Jin Z."/>
            <person name="McLellan J.S."/>
        </authorList>
    </citation>
    <scope>STRUCTURE BY ELECTRON MICROSCOPY (3.20 ANGSTROMS)</scope>
    <scope>INTERACTION WITH RNA-DIRECTED RNA POLYMERASE L</scope>
</reference>
<reference evidence="24" key="25">
    <citation type="journal article" date="2020" name="Nat. Commun.">
        <title>Cryo-EM structure of the respiratory syncytial virus RNA polymerase.</title>
        <authorList>
            <person name="Cao D."/>
            <person name="Gao Y."/>
            <person name="Roesler C."/>
            <person name="Rice S."/>
            <person name="D'Cunha P."/>
            <person name="Zhuang L."/>
            <person name="Slack J."/>
            <person name="Domke M."/>
            <person name="Antonova A."/>
            <person name="Romanelli S."/>
            <person name="Keating S."/>
            <person name="Forero G."/>
            <person name="Juneja P."/>
            <person name="Liang B."/>
        </authorList>
    </citation>
    <scope>STRUCTURE BY ELECTRON MICROSCOPY (3.67 ANGSTROMS)</scope>
    <scope>INTERACTION WITH RNA-DIRECTED RNA POLYMERASE L</scope>
    <scope>IDENTIFICATION IN THE POLYMERASE COMPLEX</scope>
</reference>
<accession>P03421</accession>
<accession>P90196</accession>
<gene>
    <name type="primary">P</name>
</gene>